<sequence>MSQLRPRDSSAGKSSSPRRTDRNPESIDVNSKGGSEGMTSGLVPGTAPHKEDETEAEDDIDCGRLITSKSLATMLTTASMYAGVSQLDDDAIESSALDEPIPYVPYEEDAESVMSESTVGVDTVRDTDSSEQINPEIDGLVALRKKQQHTLSKFELSVVRKRCSQLSLAGSSSGSTRRNSFTLDNNETTRAVKLCEKLKTTFDLSDDDEFVNDYPCWLLHEVFLQGHIYITSRYLLYFAFLPKRDSTVTMSGALSIRSSTTMRFSVRRWAVLKGNYFRLYANSTERYFPSLNIDLRFLLKVELSNPNLEENKPTVFKLITEARTHYFQADSLDNARSWVTDLRKHIFTAKNSGGHVTIKVPLENILDLSIETLFEASQTLKLKVLESEESYAIDDYYFMFFNNGDQVLDSIRQSMKALGIELTDSDSSESDSDVSGSETNGRSTHRKSKLSRSLSVLTPIPRGIGSIYKPIKSSASGIIGAIKKPQKSATRPFSSVVETVVPNDNDSELKQDHAGDAPKDSEEPSTKPSNWSAKSLVQGFLSTTSSISQSMLFASPMHYNNQLFIERGEEDPYFVTNKEEREVAQSRFRKHFSLPDSEELLASYFCHFQKNIPVYGKVYLGTTCICYRSLFPGTNTTMILPYSDIENVYNLKGFRFGYSGLVIVIRAHEELFFEFGSNESRDDCDLFLLKQLDFTKSHKNAHSEQKRKRNDSIKLAESVQLADARLRYFETRIESDIGREVPIILEENQYSTSEIRSKRRYKFVLLTIGSRGDVQPYISLAKGLLAENHKVKIVTHEEFKPWVESYGIEFATIAGNPAELMSLMVTHKSLSVGFLKEAKEKFTGWIGELLQSSWDACQDADVLIESPSAMAGIHIAEKLQIPYFRAFTMPWTRTRAYPHAFVVPEQKRGGSYNYLTHIIFENVFWKGISGEVNKWREQVLMLPKTNLERLEQNKVPFLYNVSPTVFPPSMDFPHWVKVVGYWFLDEGEADSYDPPKPLLEFMEKAKTDGKKLVYIGFGSIVVSDPKQLTEAVIDAVLSADVRCILNKGWSDRLGKQTGVEVELPEEIYNSGNVPHDWLFGKIDASVHHGGSGTTGATLRAGIPTIIKPFFGDQFFYANRVEDIGVGIGLRKLNSKSLSKAIKEVTTNTRIIEKAKEIGKQIQSENGVSAAIRCLYQEMEYAKKLSKSKQKYWDNQSEDISDDSVSGSWFEV</sequence>
<evidence type="ECO:0000250" key="1">
    <source>
        <dbReference type="UniProtKB" id="Q06321"/>
    </source>
</evidence>
<evidence type="ECO:0000255" key="2"/>
<evidence type="ECO:0000255" key="3">
    <source>
        <dbReference type="PROSITE-ProRule" id="PRU00145"/>
    </source>
</evidence>
<evidence type="ECO:0000256" key="4">
    <source>
        <dbReference type="SAM" id="MobiDB-lite"/>
    </source>
</evidence>
<evidence type="ECO:0000269" key="5">
    <source>
    </source>
</evidence>
<evidence type="ECO:0000269" key="6">
    <source>
    </source>
</evidence>
<evidence type="ECO:0000269" key="7">
    <source>
    </source>
</evidence>
<evidence type="ECO:0000269" key="8">
    <source>
    </source>
</evidence>
<evidence type="ECO:0000269" key="9">
    <source>
    </source>
</evidence>
<evidence type="ECO:0000303" key="10">
    <source>
    </source>
</evidence>
<evidence type="ECO:0000303" key="11">
    <source>
    </source>
</evidence>
<evidence type="ECO:0000305" key="12"/>
<evidence type="ECO:0000305" key="13">
    <source>
    </source>
</evidence>
<feature type="chain" id="PRO_0000215614" description="Sterol 3-beta-glucosyltransferase">
    <location>
        <begin position="1"/>
        <end position="1211"/>
    </location>
</feature>
<feature type="domain" description="GRAM 1" evidence="2">
    <location>
        <begin position="196"/>
        <end position="235"/>
    </location>
</feature>
<feature type="domain" description="PH" evidence="3">
    <location>
        <begin position="248"/>
        <end position="347"/>
    </location>
</feature>
<feature type="domain" description="GRAM 2" evidence="2">
    <location>
        <begin position="586"/>
        <end position="652"/>
    </location>
</feature>
<feature type="region of interest" description="Disordered" evidence="4">
    <location>
        <begin position="1"/>
        <end position="61"/>
    </location>
</feature>
<feature type="region of interest" description="Disordered" evidence="4">
    <location>
        <begin position="422"/>
        <end position="452"/>
    </location>
</feature>
<feature type="region of interest" description="Disordered" evidence="4">
    <location>
        <begin position="500"/>
        <end position="531"/>
    </location>
</feature>
<feature type="compositionally biased region" description="Basic and acidic residues" evidence="4">
    <location>
        <begin position="1"/>
        <end position="10"/>
    </location>
</feature>
<feature type="compositionally biased region" description="Acidic residues" evidence="4">
    <location>
        <begin position="423"/>
        <end position="432"/>
    </location>
</feature>
<feature type="compositionally biased region" description="Basic and acidic residues" evidence="4">
    <location>
        <begin position="507"/>
        <end position="525"/>
    </location>
</feature>
<feature type="binding site" evidence="1">
    <location>
        <position position="770"/>
    </location>
    <ligand>
        <name>UDP-alpha-D-glucose</name>
        <dbReference type="ChEBI" id="CHEBI:58885"/>
    </ligand>
</feature>
<feature type="binding site" evidence="1">
    <location>
        <position position="771"/>
    </location>
    <ligand>
        <name>UDP-alpha-D-glucose</name>
        <dbReference type="ChEBI" id="CHEBI:58885"/>
    </ligand>
</feature>
<feature type="binding site" evidence="1">
    <location>
        <position position="773"/>
    </location>
    <ligand>
        <name>UDP-alpha-D-glucose</name>
        <dbReference type="ChEBI" id="CHEBI:58885"/>
    </ligand>
</feature>
<feature type="binding site" evidence="1">
    <location>
        <position position="1046"/>
    </location>
    <ligand>
        <name>UDP-alpha-D-glucose</name>
        <dbReference type="ChEBI" id="CHEBI:58885"/>
    </ligand>
</feature>
<feature type="binding site" evidence="1">
    <location>
        <position position="1072"/>
    </location>
    <ligand>
        <name>UDP-alpha-D-glucose</name>
        <dbReference type="ChEBI" id="CHEBI:58885"/>
    </ligand>
</feature>
<feature type="binding site" evidence="1">
    <location>
        <position position="1073"/>
    </location>
    <ligand>
        <name>UDP-alpha-D-glucose</name>
        <dbReference type="ChEBI" id="CHEBI:58885"/>
    </ligand>
</feature>
<feature type="binding site" evidence="1">
    <location>
        <position position="1075"/>
    </location>
    <ligand>
        <name>UDP-alpha-D-glucose</name>
        <dbReference type="ChEBI" id="CHEBI:58885"/>
    </ligand>
</feature>
<feature type="binding site" evidence="1">
    <location>
        <position position="1088"/>
    </location>
    <ligand>
        <name>UDP-alpha-D-glucose</name>
        <dbReference type="ChEBI" id="CHEBI:58885"/>
    </ligand>
</feature>
<feature type="binding site" evidence="1">
    <location>
        <position position="1091"/>
    </location>
    <ligand>
        <name>UDP-alpha-D-glucose</name>
        <dbReference type="ChEBI" id="CHEBI:58885"/>
    </ligand>
</feature>
<feature type="binding site" evidence="1">
    <location>
        <position position="1092"/>
    </location>
    <ligand>
        <name>UDP-alpha-D-glucose</name>
        <dbReference type="ChEBI" id="CHEBI:58885"/>
    </ligand>
</feature>
<feature type="binding site" evidence="1">
    <location>
        <position position="1093"/>
    </location>
    <ligand>
        <name>UDP-alpha-D-glucose</name>
        <dbReference type="ChEBI" id="CHEBI:58885"/>
    </ligand>
</feature>
<feature type="binding site" evidence="1">
    <location>
        <position position="1112"/>
    </location>
    <ligand>
        <name>UDP-alpha-D-glucose</name>
        <dbReference type="ChEBI" id="CHEBI:58885"/>
    </ligand>
</feature>
<feature type="binding site" evidence="1">
    <location>
        <position position="1113"/>
    </location>
    <ligand>
        <name>UDP-alpha-D-glucose</name>
        <dbReference type="ChEBI" id="CHEBI:58885"/>
    </ligand>
</feature>
<protein>
    <recommendedName>
        <fullName evidence="13">Sterol 3-beta-glucosyltransferase</fullName>
        <ecNumber evidence="8">2.4.1.-</ecNumber>
        <ecNumber evidence="8">2.4.1.173</ecNumber>
    </recommendedName>
    <alternativeName>
        <fullName evidence="1">Autophagy-related protein 26</fullName>
    </alternativeName>
    <alternativeName>
        <fullName>Peroxisome degradation protein 3</fullName>
    </alternativeName>
    <alternativeName>
        <fullName evidence="11">Pexophagy zeocin-resistant mutant protein 4</fullName>
    </alternativeName>
    <alternativeName>
        <fullName evidence="10">UDP-glycosyltransferase 51</fullName>
    </alternativeName>
</protein>
<reference key="1">
    <citation type="journal article" date="1999" name="J. Biol. Chem.">
        <title>Cloning and functional expression of UGT genes encoding sterol glucosyltransferases from Saccharomyces cerevisiae, Candida albicans, Pichia pastoris, and Dictyostelium discoideum.</title>
        <authorList>
            <person name="Warnecke D.C."/>
            <person name="Erdmann R."/>
            <person name="Fahl A."/>
            <person name="Hube B."/>
            <person name="Mueller F."/>
            <person name="Zank T."/>
            <person name="Zaehringer U."/>
            <person name="Heinz E."/>
        </authorList>
    </citation>
    <scope>NUCLEOTIDE SEQUENCE [GENOMIC DNA]</scope>
    <scope>IDENTIFICATION</scope>
</reference>
<reference key="2">
    <citation type="journal article" date="2009" name="Nat. Biotechnol.">
        <title>Genome sequence of the recombinant protein production host Pichia pastoris.</title>
        <authorList>
            <person name="De Schutter K."/>
            <person name="Lin Y.-C."/>
            <person name="Tiels P."/>
            <person name="Van Hecke A."/>
            <person name="Glinka S."/>
            <person name="Weber-Lehmann J."/>
            <person name="Rouze P."/>
            <person name="Van de Peer Y."/>
            <person name="Callewaert N."/>
        </authorList>
    </citation>
    <scope>NUCLEOTIDE SEQUENCE [LARGE SCALE GENOMIC DNA]</scope>
    <source>
        <strain>GS115 / ATCC 20864</strain>
    </source>
</reference>
<reference key="3">
    <citation type="journal article" date="2002" name="Genes Cells">
        <title>Paz2 and 13 other PAZ gene products regulate vacuolar engulfment of peroxisomes during micropexophagy.</title>
        <authorList>
            <person name="Mukaiyama H."/>
            <person name="Oku M."/>
            <person name="Baba M."/>
            <person name="Samizo T."/>
            <person name="Hammond A.T."/>
            <person name="Glick B.S."/>
            <person name="Kato N."/>
            <person name="Sakai Y."/>
        </authorList>
    </citation>
    <scope>FUNCTION</scope>
</reference>
<reference key="4">
    <citation type="journal article" date="2003" name="Cell Biol. Int.">
        <title>Sterol glucosyltransferases have different functional roles in Pichia pastoris and Yarrowia lipolytica.</title>
        <authorList>
            <person name="Stasyk O.V."/>
            <person name="Nazarko T.Y."/>
            <person name="Stasyk O.G."/>
            <person name="Krasovska O.S."/>
            <person name="Warnecke D.C."/>
            <person name="Nicaud J.-M."/>
            <person name="Cregg J.M."/>
            <person name="Sibirny A.A."/>
        </authorList>
    </citation>
    <scope>FUNCTION</scope>
</reference>
<reference key="5">
    <citation type="journal article" date="2003" name="EMBO J.">
        <title>Peroxisome degradation requires catalytically active sterol glucosyltransferase with a GRAM domain.</title>
        <authorList>
            <person name="Oku M."/>
            <person name="Warnecke D.C."/>
            <person name="Noda T."/>
            <person name="Mueller F."/>
            <person name="Heinz E."/>
            <person name="Mukaiyama H."/>
            <person name="Kato N."/>
            <person name="Sakai Y."/>
        </authorList>
    </citation>
    <scope>FUNCTION</scope>
    <scope>SUBCELLULAR LOCATION</scope>
    <scope>DOMAIN</scope>
</reference>
<reference key="6">
    <citation type="journal article" date="2009" name="Mol. Biol. Cell">
        <title>Peroxisome size provides insights into the function of autophagy-related proteins.</title>
        <authorList>
            <person name="Nazarko T.Y."/>
            <person name="Farre J.C."/>
            <person name="Subramani S."/>
        </authorList>
    </citation>
    <scope>FUNCTION</scope>
</reference>
<accession>Q9Y751</accession>
<accession>C4R718</accession>
<proteinExistence type="inferred from homology"/>
<keyword id="KW-0072">Autophagy</keyword>
<keyword id="KW-0963">Cytoplasm</keyword>
<keyword id="KW-0328">Glycosyltransferase</keyword>
<keyword id="KW-0444">Lipid biosynthesis</keyword>
<keyword id="KW-0443">Lipid metabolism</keyword>
<keyword id="KW-0472">Membrane</keyword>
<keyword id="KW-0653">Protein transport</keyword>
<keyword id="KW-1185">Reference proteome</keyword>
<keyword id="KW-0677">Repeat</keyword>
<keyword id="KW-0752">Steroid biosynthesis</keyword>
<keyword id="KW-0753">Steroid metabolism</keyword>
<keyword id="KW-0756">Sterol biosynthesis</keyword>
<keyword id="KW-1207">Sterol metabolism</keyword>
<keyword id="KW-0808">Transferase</keyword>
<keyword id="KW-0813">Transport</keyword>
<comment type="function">
    <text evidence="5 6 7 8 9">Sterol glycosyltransferase responsible for the glycosylation of ergosterol to form ergosterol-glucoside (PubMed:10224056). Shows also activity in vitro on other sterols such as cholesterol, beta-sitosterol, stigmasterol and tomatidine (PubMed:10224056). Probable sterol 3-beta-glucosyltransferase that mediates autophagic degradation of peroxisomes (pexophagy) (PubMed:11856375, PubMed:12839986, PubMed:14585290, PubMed:19605559).</text>
</comment>
<comment type="catalytic activity">
    <reaction evidence="8">
        <text>a sterol + UDP-alpha-D-glucose = a sterol 3-beta-D-glucoside + UDP + H(+)</text>
        <dbReference type="Rhea" id="RHEA:22724"/>
        <dbReference type="ChEBI" id="CHEBI:15378"/>
        <dbReference type="ChEBI" id="CHEBI:15889"/>
        <dbReference type="ChEBI" id="CHEBI:37424"/>
        <dbReference type="ChEBI" id="CHEBI:58223"/>
        <dbReference type="ChEBI" id="CHEBI:58885"/>
        <dbReference type="EC" id="2.4.1.173"/>
    </reaction>
    <physiologicalReaction direction="left-to-right" evidence="8">
        <dbReference type="Rhea" id="RHEA:22725"/>
    </physiologicalReaction>
</comment>
<comment type="catalytic activity">
    <reaction evidence="8">
        <text>ergosterol + UDP-alpha-D-glucose = ergosteryl 3-beta-D-glucoside + UDP + H(+)</text>
        <dbReference type="Rhea" id="RHEA:61836"/>
        <dbReference type="ChEBI" id="CHEBI:15378"/>
        <dbReference type="ChEBI" id="CHEBI:16933"/>
        <dbReference type="ChEBI" id="CHEBI:52973"/>
        <dbReference type="ChEBI" id="CHEBI:58223"/>
        <dbReference type="ChEBI" id="CHEBI:58885"/>
    </reaction>
    <physiologicalReaction direction="left-to-right" evidence="8">
        <dbReference type="Rhea" id="RHEA:61837"/>
    </physiologicalReaction>
</comment>
<comment type="subcellular location">
    <subcellularLocation>
        <location evidence="7">Cytoplasm</location>
    </subcellularLocation>
    <subcellularLocation>
        <location evidence="7">Preautophagosomal structure membrane</location>
        <topology evidence="7">Peripheral membrane protein</topology>
    </subcellularLocation>
</comment>
<comment type="domain">
    <text evidence="7">The first GRAM domain is required for association with the micropexophagic apparatus (PubMed:12839986).</text>
</comment>
<comment type="similarity">
    <text evidence="12">Belongs to the glycosyltransferase 28 family.</text>
</comment>
<gene>
    <name evidence="1" type="primary">ATG26</name>
    <name evidence="11" type="synonym">PAZ4</name>
    <name type="synonym">PDG3</name>
    <name evidence="10" type="synonym">UGT51</name>
    <name type="synonym">UGT51B1</name>
    <name type="ordered locus">PAS_chr4_0167</name>
</gene>
<dbReference type="EC" id="2.4.1.-" evidence="8"/>
<dbReference type="EC" id="2.4.1.173" evidence="8"/>
<dbReference type="EMBL" id="AF091397">
    <property type="protein sequence ID" value="AAD29570.1"/>
    <property type="molecule type" value="Genomic_DNA"/>
</dbReference>
<dbReference type="EMBL" id="FN392322">
    <property type="protein sequence ID" value="CAY71393.1"/>
    <property type="molecule type" value="Genomic_DNA"/>
</dbReference>
<dbReference type="RefSeq" id="XP_002493572.1">
    <property type="nucleotide sequence ID" value="XM_002493527.1"/>
</dbReference>
<dbReference type="SMR" id="Q9Y751"/>
<dbReference type="FunCoup" id="Q9Y751">
    <property type="interactions" value="111"/>
</dbReference>
<dbReference type="STRING" id="644223.Q9Y751"/>
<dbReference type="CAZy" id="GT1">
    <property type="family name" value="Glycosyltransferase Family 1"/>
</dbReference>
<dbReference type="EnsemblFungi" id="CAY71393">
    <property type="protein sequence ID" value="CAY71393"/>
    <property type="gene ID" value="PAS_chr4_0167"/>
</dbReference>
<dbReference type="GeneID" id="8201077"/>
<dbReference type="KEGG" id="ppa:PAS_chr4_0167"/>
<dbReference type="eggNOG" id="KOG1192">
    <property type="taxonomic scope" value="Eukaryota"/>
</dbReference>
<dbReference type="HOGENOM" id="CLU_000537_6_0_1"/>
<dbReference type="InParanoid" id="Q9Y751"/>
<dbReference type="OMA" id="WRNKTLG"/>
<dbReference type="OrthoDB" id="10261837at2759"/>
<dbReference type="BRENDA" id="2.4.1.173">
    <property type="organism ID" value="4827"/>
</dbReference>
<dbReference type="Proteomes" id="UP000000314">
    <property type="component" value="Chromosome 4"/>
</dbReference>
<dbReference type="GO" id="GO:0034045">
    <property type="term" value="C:phagophore assembly site membrane"/>
    <property type="evidence" value="ECO:0007669"/>
    <property type="project" value="UniProtKB-SubCell"/>
</dbReference>
<dbReference type="GO" id="GO:0016906">
    <property type="term" value="F:sterol 3-beta-glucosyltransferase activity"/>
    <property type="evidence" value="ECO:0007669"/>
    <property type="project" value="UniProtKB-EC"/>
</dbReference>
<dbReference type="GO" id="GO:0006914">
    <property type="term" value="P:autophagy"/>
    <property type="evidence" value="ECO:0007669"/>
    <property type="project" value="UniProtKB-KW"/>
</dbReference>
<dbReference type="GO" id="GO:0005975">
    <property type="term" value="P:carbohydrate metabolic process"/>
    <property type="evidence" value="ECO:0007669"/>
    <property type="project" value="InterPro"/>
</dbReference>
<dbReference type="GO" id="GO:0030259">
    <property type="term" value="P:lipid glycosylation"/>
    <property type="evidence" value="ECO:0007669"/>
    <property type="project" value="InterPro"/>
</dbReference>
<dbReference type="GO" id="GO:0015031">
    <property type="term" value="P:protein transport"/>
    <property type="evidence" value="ECO:0007669"/>
    <property type="project" value="UniProtKB-KW"/>
</dbReference>
<dbReference type="GO" id="GO:0016126">
    <property type="term" value="P:sterol biosynthetic process"/>
    <property type="evidence" value="ECO:0007669"/>
    <property type="project" value="UniProtKB-KW"/>
</dbReference>
<dbReference type="CDD" id="cd03784">
    <property type="entry name" value="GT1_Gtf-like"/>
    <property type="match status" value="1"/>
</dbReference>
<dbReference type="CDD" id="cd13215">
    <property type="entry name" value="PH-GRAM1_AGT26"/>
    <property type="match status" value="1"/>
</dbReference>
<dbReference type="CDD" id="cd13216">
    <property type="entry name" value="PH-GRAM2_AGT26"/>
    <property type="match status" value="1"/>
</dbReference>
<dbReference type="FunFam" id="2.30.29.30:FF:000303">
    <property type="entry name" value="Sterol 3-beta-glucosyltransferase"/>
    <property type="match status" value="1"/>
</dbReference>
<dbReference type="FunFam" id="3.40.50.2000:FF:000029">
    <property type="entry name" value="Sterol 3-beta-glucosyltransferase"/>
    <property type="match status" value="1"/>
</dbReference>
<dbReference type="FunFam" id="3.40.50.2000:FF:000009">
    <property type="entry name" value="Sterol 3-beta-glucosyltransferase UGT80A2"/>
    <property type="match status" value="1"/>
</dbReference>
<dbReference type="Gene3D" id="3.40.50.2000">
    <property type="entry name" value="Glycogen Phosphorylase B"/>
    <property type="match status" value="2"/>
</dbReference>
<dbReference type="Gene3D" id="2.30.29.30">
    <property type="entry name" value="Pleckstrin-homology domain (PH domain)/Phosphotyrosine-binding domain (PTB)"/>
    <property type="match status" value="2"/>
</dbReference>
<dbReference type="InterPro" id="IPR048066">
    <property type="entry name" value="ATG26_PH_GRAM1"/>
</dbReference>
<dbReference type="InterPro" id="IPR048065">
    <property type="entry name" value="ATG26_PH_GRAM2"/>
</dbReference>
<dbReference type="InterPro" id="IPR010610">
    <property type="entry name" value="EryCIII-like_C"/>
</dbReference>
<dbReference type="InterPro" id="IPR050426">
    <property type="entry name" value="Glycosyltransferase_28"/>
</dbReference>
<dbReference type="InterPro" id="IPR004276">
    <property type="entry name" value="GlycoTrans_28_N"/>
</dbReference>
<dbReference type="InterPro" id="IPR004182">
    <property type="entry name" value="GRAM"/>
</dbReference>
<dbReference type="InterPro" id="IPR011993">
    <property type="entry name" value="PH-like_dom_sf"/>
</dbReference>
<dbReference type="InterPro" id="IPR001849">
    <property type="entry name" value="PH_domain"/>
</dbReference>
<dbReference type="InterPro" id="IPR002213">
    <property type="entry name" value="UDP_glucos_trans"/>
</dbReference>
<dbReference type="PANTHER" id="PTHR48050">
    <property type="entry name" value="STEROL 3-BETA-GLUCOSYLTRANSFERASE"/>
    <property type="match status" value="1"/>
</dbReference>
<dbReference type="PANTHER" id="PTHR48050:SF25">
    <property type="entry name" value="STEROL 3-BETA-GLUCOSYLTRANSFERASE"/>
    <property type="match status" value="1"/>
</dbReference>
<dbReference type="Pfam" id="PF06722">
    <property type="entry name" value="EryCIII-like_C"/>
    <property type="match status" value="1"/>
</dbReference>
<dbReference type="Pfam" id="PF03033">
    <property type="entry name" value="Glyco_transf_28"/>
    <property type="match status" value="1"/>
</dbReference>
<dbReference type="Pfam" id="PF02893">
    <property type="entry name" value="GRAM"/>
    <property type="match status" value="1"/>
</dbReference>
<dbReference type="Pfam" id="PF00169">
    <property type="entry name" value="PH"/>
    <property type="match status" value="1"/>
</dbReference>
<dbReference type="SMART" id="SM00568">
    <property type="entry name" value="GRAM"/>
    <property type="match status" value="2"/>
</dbReference>
<dbReference type="SMART" id="SM00233">
    <property type="entry name" value="PH"/>
    <property type="match status" value="1"/>
</dbReference>
<dbReference type="SUPFAM" id="SSF50729">
    <property type="entry name" value="PH domain-like"/>
    <property type="match status" value="1"/>
</dbReference>
<dbReference type="SUPFAM" id="SSF53756">
    <property type="entry name" value="UDP-Glycosyltransferase/glycogen phosphorylase"/>
    <property type="match status" value="1"/>
</dbReference>
<dbReference type="PROSITE" id="PS50003">
    <property type="entry name" value="PH_DOMAIN"/>
    <property type="match status" value="1"/>
</dbReference>
<organism>
    <name type="scientific">Komagataella phaffii (strain GS115 / ATCC 20864)</name>
    <name type="common">Yeast</name>
    <name type="synonym">Pichia pastoris</name>
    <dbReference type="NCBI Taxonomy" id="644223"/>
    <lineage>
        <taxon>Eukaryota</taxon>
        <taxon>Fungi</taxon>
        <taxon>Dikarya</taxon>
        <taxon>Ascomycota</taxon>
        <taxon>Saccharomycotina</taxon>
        <taxon>Pichiomycetes</taxon>
        <taxon>Pichiales</taxon>
        <taxon>Pichiaceae</taxon>
        <taxon>Komagataella</taxon>
    </lineage>
</organism>
<name>ATG26_KOMPG</name>